<protein>
    <recommendedName>
        <fullName>RNA-binding protein 5</fullName>
    </recommendedName>
    <alternativeName>
        <fullName>Protein G15</fullName>
    </alternativeName>
    <alternativeName>
        <fullName>Putative tumor suppressor LUCA15</fullName>
    </alternativeName>
    <alternativeName>
        <fullName>RNA-binding motif protein 5</fullName>
    </alternativeName>
    <alternativeName>
        <fullName>Renal carcinoma antigen NY-REN-9</fullName>
    </alternativeName>
</protein>
<keyword id="KW-0002">3D-structure</keyword>
<keyword id="KW-0025">Alternative splicing</keyword>
<keyword id="KW-0053">Apoptosis</keyword>
<keyword id="KW-0479">Metal-binding</keyword>
<keyword id="KW-0507">mRNA processing</keyword>
<keyword id="KW-0508">mRNA splicing</keyword>
<keyword id="KW-0539">Nucleus</keyword>
<keyword id="KW-0597">Phosphoprotein</keyword>
<keyword id="KW-1267">Proteomics identification</keyword>
<keyword id="KW-1185">Reference proteome</keyword>
<keyword id="KW-0677">Repeat</keyword>
<keyword id="KW-0694">RNA-binding</keyword>
<keyword id="KW-0747">Spliceosome</keyword>
<keyword id="KW-0862">Zinc</keyword>
<keyword id="KW-0863">Zinc-finger</keyword>
<organism>
    <name type="scientific">Homo sapiens</name>
    <name type="common">Human</name>
    <dbReference type="NCBI Taxonomy" id="9606"/>
    <lineage>
        <taxon>Eukaryota</taxon>
        <taxon>Metazoa</taxon>
        <taxon>Chordata</taxon>
        <taxon>Craniata</taxon>
        <taxon>Vertebrata</taxon>
        <taxon>Euteleostomi</taxon>
        <taxon>Mammalia</taxon>
        <taxon>Eutheria</taxon>
        <taxon>Euarchontoglires</taxon>
        <taxon>Primates</taxon>
        <taxon>Haplorrhini</taxon>
        <taxon>Catarrhini</taxon>
        <taxon>Hominidae</taxon>
        <taxon>Homo</taxon>
    </lineage>
</organism>
<accession>P52756</accession>
<accession>B2RA45</accession>
<accession>B4DM16</accession>
<accession>B4DMF9</accession>
<accession>B4DZ63</accession>
<accession>Q93021</accession>
<accession>Q9BU14</accession>
<accession>Q9HDA6</accession>
<accession>Q9UKY8</accession>
<accession>Q9UL24</accession>
<feature type="chain" id="PRO_0000081759" description="RNA-binding protein 5">
    <location>
        <begin position="1"/>
        <end position="815"/>
    </location>
</feature>
<feature type="domain" description="RRM 1" evidence="3">
    <location>
        <begin position="98"/>
        <end position="178"/>
    </location>
</feature>
<feature type="domain" description="RRM 2" evidence="3">
    <location>
        <begin position="231"/>
        <end position="315"/>
    </location>
</feature>
<feature type="domain" description="G-patch" evidence="2">
    <location>
        <begin position="743"/>
        <end position="789"/>
    </location>
</feature>
<feature type="zinc finger region" description="RanBP2-type" evidence="4">
    <location>
        <begin position="181"/>
        <end position="210"/>
    </location>
</feature>
<feature type="zinc finger region" description="C2H2-type; atypical" evidence="1">
    <location>
        <begin position="647"/>
        <end position="677"/>
    </location>
</feature>
<feature type="region of interest" description="Disordered" evidence="5">
    <location>
        <begin position="1"/>
        <end position="93"/>
    </location>
</feature>
<feature type="region of interest" description="Required for interaction with U2AF2" evidence="13">
    <location>
        <begin position="321"/>
        <end position="809"/>
    </location>
</feature>
<feature type="region of interest" description="Disordered" evidence="5">
    <location>
        <begin position="411"/>
        <end position="468"/>
    </location>
</feature>
<feature type="region of interest" description="Sufficient for interaction with ACIN1, PRPF8, SFRS3, SNRPB, SNRPN, SNRNP70 and SNRNP200" evidence="13">
    <location>
        <begin position="452"/>
        <end position="535"/>
    </location>
</feature>
<feature type="region of interest" description="Disordered" evidence="5">
    <location>
        <begin position="507"/>
        <end position="540"/>
    </location>
</feature>
<feature type="compositionally biased region" description="Polar residues" evidence="5">
    <location>
        <begin position="411"/>
        <end position="422"/>
    </location>
</feature>
<feature type="compositionally biased region" description="Low complexity" evidence="5">
    <location>
        <begin position="426"/>
        <end position="446"/>
    </location>
</feature>
<feature type="modified residue" description="Phosphoserine" evidence="25">
    <location>
        <position position="18"/>
    </location>
</feature>
<feature type="modified residue" description="Phosphoserine" evidence="25">
    <location>
        <position position="59"/>
    </location>
</feature>
<feature type="modified residue" description="Phosphoserine" evidence="25">
    <location>
        <position position="69"/>
    </location>
</feature>
<feature type="modified residue" description="Phosphoserine" evidence="25">
    <location>
        <position position="72"/>
    </location>
</feature>
<feature type="modified residue" description="Phosphoserine" evidence="25">
    <location>
        <position position="78"/>
    </location>
</feature>
<feature type="modified residue" description="Phosphoserine" evidence="26">
    <location>
        <position position="444"/>
    </location>
</feature>
<feature type="modified residue" description="Phosphoserine" evidence="20 22">
    <location>
        <position position="621"/>
    </location>
</feature>
<feature type="modified residue" description="Phosphoserine" evidence="18 19 20 21 22 23 24 25 26">
    <location>
        <position position="624"/>
    </location>
</feature>
<feature type="splice variant" id="VSP_037429" description="In isoform 3." evidence="16">
    <original>ERRNSDRSEDGYHSDGDYGEHDYRHDISDERESKTIMLRGLPITITESDIREMMESFEGPQP</original>
    <variation>YSRNDGVLRRPSACGCEADEEENRCKPWFRLRGVLSLARCYQLDGSQSEKVGDSRKAHCNAL</variation>
    <location>
        <begin position="65"/>
        <end position="126"/>
    </location>
</feature>
<feature type="splice variant" id="VSP_037430" description="In isoform 3." evidence="16">
    <location>
        <begin position="127"/>
        <end position="815"/>
    </location>
</feature>
<feature type="splice variant" id="VSP_037431" description="In isoform 5." evidence="16">
    <original>GVSRGFAFVEFYHL</original>
    <variation>EKVGDSRKAHCNAL</variation>
    <location>
        <begin position="137"/>
        <end position="150"/>
    </location>
</feature>
<feature type="splice variant" id="VSP_037432" description="In isoform 2." evidence="15">
    <original>VSRGFA</original>
    <variation>ESLLSS</variation>
    <location>
        <begin position="138"/>
        <end position="143"/>
    </location>
</feature>
<feature type="splice variant" id="VSP_037433" description="In isoform 4." evidence="16">
    <location>
        <begin position="142"/>
        <end position="815"/>
    </location>
</feature>
<feature type="splice variant" id="VSP_037434" description="In isoform 2." evidence="15">
    <location>
        <begin position="144"/>
        <end position="815"/>
    </location>
</feature>
<feature type="splice variant" id="VSP_037435" description="In isoform 5." evidence="16">
    <location>
        <begin position="151"/>
        <end position="815"/>
    </location>
</feature>
<feature type="sequence variant" id="VAR_061831" description="In dbSNP:rs56783610.">
    <original>K</original>
    <variation>N</variation>
    <location>
        <position position="163"/>
    </location>
</feature>
<feature type="sequence conflict" description="In Ref. 1; AAA99715." evidence="17" ref="1">
    <original>DY</original>
    <variation>GS</variation>
    <location>
        <begin position="53"/>
        <end position="54"/>
    </location>
</feature>
<feature type="sequence conflict" description="In Ref. 1; AAA99715." evidence="17" ref="1">
    <original>G</original>
    <variation>V</variation>
    <location>
        <position position="354"/>
    </location>
</feature>
<feature type="sequence conflict" description="In Ref. 8; AAB42216." evidence="17" ref="8">
    <location>
        <position position="455"/>
    </location>
</feature>
<feature type="sequence conflict" description="In Ref. 8; AAB42216." evidence="17" ref="8">
    <original>G</original>
    <variation>A</variation>
    <location>
        <position position="788"/>
    </location>
</feature>
<feature type="sequence conflict" description="In Ref. 1; AAA99715." evidence="17" ref="1">
    <original>T</original>
    <variation>I</variation>
    <location>
        <position position="812"/>
    </location>
</feature>
<feature type="strand" evidence="30">
    <location>
        <begin position="98"/>
        <end position="104"/>
    </location>
</feature>
<feature type="helix" evidence="30">
    <location>
        <begin position="111"/>
        <end position="118"/>
    </location>
</feature>
<feature type="strand" evidence="30">
    <location>
        <begin position="122"/>
        <end position="124"/>
    </location>
</feature>
<feature type="strand" evidence="30">
    <location>
        <begin position="127"/>
        <end position="133"/>
    </location>
</feature>
<feature type="strand" evidence="30">
    <location>
        <begin position="135"/>
        <end position="137"/>
    </location>
</feature>
<feature type="strand" evidence="30">
    <location>
        <begin position="139"/>
        <end position="146"/>
    </location>
</feature>
<feature type="helix" evidence="30">
    <location>
        <begin position="150"/>
        <end position="160"/>
    </location>
</feature>
<feature type="turn" evidence="30">
    <location>
        <begin position="161"/>
        <end position="163"/>
    </location>
</feature>
<feature type="strand" evidence="30">
    <location>
        <begin position="172"/>
        <end position="176"/>
    </location>
</feature>
<feature type="strand" evidence="30">
    <location>
        <begin position="181"/>
        <end position="183"/>
    </location>
</feature>
<feature type="turn" evidence="30">
    <location>
        <begin position="188"/>
        <end position="190"/>
    </location>
</feature>
<feature type="strand" evidence="27">
    <location>
        <begin position="193"/>
        <end position="195"/>
    </location>
</feature>
<feature type="strand" evidence="30">
    <location>
        <begin position="202"/>
        <end position="204"/>
    </location>
</feature>
<feature type="strand" evidence="28">
    <location>
        <begin position="232"/>
        <end position="237"/>
    </location>
</feature>
<feature type="helix" evidence="28">
    <location>
        <begin position="244"/>
        <end position="250"/>
    </location>
</feature>
<feature type="turn" evidence="28">
    <location>
        <begin position="252"/>
        <end position="254"/>
    </location>
</feature>
<feature type="helix" evidence="28">
    <location>
        <begin position="259"/>
        <end position="261"/>
    </location>
</feature>
<feature type="strand" evidence="28">
    <location>
        <begin position="268"/>
        <end position="272"/>
    </location>
</feature>
<feature type="strand" evidence="28">
    <location>
        <begin position="274"/>
        <end position="280"/>
    </location>
</feature>
<feature type="strand" evidence="28">
    <location>
        <begin position="282"/>
        <end position="284"/>
    </location>
</feature>
<feature type="helix" evidence="28">
    <location>
        <begin position="285"/>
        <end position="295"/>
    </location>
</feature>
<feature type="strand" evidence="28">
    <location>
        <begin position="296"/>
        <end position="299"/>
    </location>
</feature>
<feature type="strand" evidence="28">
    <location>
        <begin position="301"/>
        <end position="303"/>
    </location>
</feature>
<feature type="strand" evidence="28">
    <location>
        <begin position="306"/>
        <end position="312"/>
    </location>
</feature>
<feature type="turn" evidence="29">
    <location>
        <begin position="459"/>
        <end position="461"/>
    </location>
</feature>
<feature type="strand" evidence="29">
    <location>
        <begin position="463"/>
        <end position="465"/>
    </location>
</feature>
<feature type="turn" evidence="29">
    <location>
        <begin position="466"/>
        <end position="469"/>
    </location>
</feature>
<feature type="strand" evidence="29">
    <location>
        <begin position="470"/>
        <end position="473"/>
    </location>
</feature>
<feature type="turn" evidence="29">
    <location>
        <begin position="474"/>
        <end position="477"/>
    </location>
</feature>
<feature type="strand" evidence="29">
    <location>
        <begin position="478"/>
        <end position="480"/>
    </location>
</feature>
<feature type="turn" evidence="29">
    <location>
        <begin position="482"/>
        <end position="484"/>
    </location>
</feature>
<feature type="strand" evidence="29">
    <location>
        <begin position="487"/>
        <end position="489"/>
    </location>
</feature>
<feature type="turn" evidence="29">
    <location>
        <begin position="490"/>
        <end position="493"/>
    </location>
</feature>
<feature type="strand" evidence="29">
    <location>
        <begin position="494"/>
        <end position="498"/>
    </location>
</feature>
<feature type="strand" evidence="29">
    <location>
        <begin position="500"/>
        <end position="507"/>
    </location>
</feature>
<reference key="1">
    <citation type="submission" date="1996-04" db="EMBL/GenBank/DDBJ databases">
        <title>A putative tumor suppressor gene LUCA15 on 3p21.3 encodes two RNA recognizing motifs and is related to the Drosophila tumor suppressor gene Sxl.</title>
        <authorList>
            <person name="Bader S."/>
            <person name="Latif F."/>
            <person name="Duh F.-M."/>
            <person name="Wei M."/>
            <person name="Kashuba V."/>
            <person name="Sekido Y."/>
            <person name="Lee C."/>
            <person name="Koonin E."/>
            <person name="Zabarofsky E."/>
            <person name="Klein G."/>
            <person name="Minna J.D."/>
            <person name="Lerman M.I."/>
        </authorList>
    </citation>
    <scope>NUCLEOTIDE SEQUENCE [MRNA] (ISOFORM 1)</scope>
</reference>
<reference key="2">
    <citation type="journal article" date="1999" name="Genomics">
        <title>An evolutionary rearrangement of the Xp11.3-11.23 region in 3p21.3, a region frequently deleted in a variety of cancers.</title>
        <authorList>
            <person name="Timmer T."/>
            <person name="Terpstra P."/>
            <person name="van den Berg A."/>
            <person name="Veldhuis P.M.J.F."/>
            <person name="Ter Elst A."/>
            <person name="van der Veen A.Y."/>
            <person name="Kok K."/>
            <person name="Naylor S.L."/>
            <person name="Buys C.H.C.M."/>
        </authorList>
    </citation>
    <scope>NUCLEOTIDE SEQUENCE [MRNA] (ISOFORM 1)</scope>
    <source>
        <tissue>Brain</tissue>
    </source>
</reference>
<reference key="3">
    <citation type="journal article" date="1999" name="Nucleic Acids Res.">
        <title>Identification of differentially expressed genes associated with HER-2/neu overexpression in human breast cancer cells.</title>
        <authorList>
            <person name="Oh J.J."/>
            <person name="Grosshans D.R."/>
            <person name="Wong S.G."/>
            <person name="Slamon D.J."/>
        </authorList>
    </citation>
    <scope>NUCLEOTIDE SEQUENCE [MRNA] (ISOFORM 1)</scope>
    <source>
        <tissue>Brain</tissue>
    </source>
</reference>
<reference key="4">
    <citation type="submission" date="2001-04" db="EMBL/GenBank/DDBJ databases">
        <authorList>
            <person name="Oh J.J."/>
            <person name="Wong S.G."/>
            <person name="Slamon D.J."/>
        </authorList>
    </citation>
    <scope>SEQUENCE REVISION TO 61</scope>
    <source>
        <tissue>Testis</tissue>
    </source>
</reference>
<reference key="5">
    <citation type="journal article" date="2000" name="Oncogene">
        <title>LUCA-15-encoded sequence variants regulate CD95-mediated apoptosis.</title>
        <authorList>
            <person name="Sutherland L.C."/>
            <person name="Edwards S.E."/>
            <person name="Cable H.C."/>
            <person name="Poirier G.G."/>
            <person name="Miller B.A."/>
            <person name="Cooper C.S."/>
            <person name="Williams G.T."/>
        </authorList>
    </citation>
    <scope>NUCLEOTIDE SEQUENCE [MRNA] (ISOFORM 2)</scope>
    <scope>ALTERNATIVE SPLICING</scope>
    <scope>FUNCTION</scope>
</reference>
<reference key="6">
    <citation type="journal article" date="2004" name="Nat. Genet.">
        <title>Complete sequencing and characterization of 21,243 full-length human cDNAs.</title>
        <authorList>
            <person name="Ota T."/>
            <person name="Suzuki Y."/>
            <person name="Nishikawa T."/>
            <person name="Otsuki T."/>
            <person name="Sugiyama T."/>
            <person name="Irie R."/>
            <person name="Wakamatsu A."/>
            <person name="Hayashi K."/>
            <person name="Sato H."/>
            <person name="Nagai K."/>
            <person name="Kimura K."/>
            <person name="Makita H."/>
            <person name="Sekine M."/>
            <person name="Obayashi M."/>
            <person name="Nishi T."/>
            <person name="Shibahara T."/>
            <person name="Tanaka T."/>
            <person name="Ishii S."/>
            <person name="Yamamoto J."/>
            <person name="Saito K."/>
            <person name="Kawai Y."/>
            <person name="Isono Y."/>
            <person name="Nakamura Y."/>
            <person name="Nagahari K."/>
            <person name="Murakami K."/>
            <person name="Yasuda T."/>
            <person name="Iwayanagi T."/>
            <person name="Wagatsuma M."/>
            <person name="Shiratori A."/>
            <person name="Sudo H."/>
            <person name="Hosoiri T."/>
            <person name="Kaku Y."/>
            <person name="Kodaira H."/>
            <person name="Kondo H."/>
            <person name="Sugawara M."/>
            <person name="Takahashi M."/>
            <person name="Kanda K."/>
            <person name="Yokoi T."/>
            <person name="Furuya T."/>
            <person name="Kikkawa E."/>
            <person name="Omura Y."/>
            <person name="Abe K."/>
            <person name="Kamihara K."/>
            <person name="Katsuta N."/>
            <person name="Sato K."/>
            <person name="Tanikawa M."/>
            <person name="Yamazaki M."/>
            <person name="Ninomiya K."/>
            <person name="Ishibashi T."/>
            <person name="Yamashita H."/>
            <person name="Murakawa K."/>
            <person name="Fujimori K."/>
            <person name="Tanai H."/>
            <person name="Kimata M."/>
            <person name="Watanabe M."/>
            <person name="Hiraoka S."/>
            <person name="Chiba Y."/>
            <person name="Ishida S."/>
            <person name="Ono Y."/>
            <person name="Takiguchi S."/>
            <person name="Watanabe S."/>
            <person name="Yosida M."/>
            <person name="Hotuta T."/>
            <person name="Kusano J."/>
            <person name="Kanehori K."/>
            <person name="Takahashi-Fujii A."/>
            <person name="Hara H."/>
            <person name="Tanase T.-O."/>
            <person name="Nomura Y."/>
            <person name="Togiya S."/>
            <person name="Komai F."/>
            <person name="Hara R."/>
            <person name="Takeuchi K."/>
            <person name="Arita M."/>
            <person name="Imose N."/>
            <person name="Musashino K."/>
            <person name="Yuuki H."/>
            <person name="Oshima A."/>
            <person name="Sasaki N."/>
            <person name="Aotsuka S."/>
            <person name="Yoshikawa Y."/>
            <person name="Matsunawa H."/>
            <person name="Ichihara T."/>
            <person name="Shiohata N."/>
            <person name="Sano S."/>
            <person name="Moriya S."/>
            <person name="Momiyama H."/>
            <person name="Satoh N."/>
            <person name="Takami S."/>
            <person name="Terashima Y."/>
            <person name="Suzuki O."/>
            <person name="Nakagawa S."/>
            <person name="Senoh A."/>
            <person name="Mizoguchi H."/>
            <person name="Goto Y."/>
            <person name="Shimizu F."/>
            <person name="Wakebe H."/>
            <person name="Hishigaki H."/>
            <person name="Watanabe T."/>
            <person name="Sugiyama A."/>
            <person name="Takemoto M."/>
            <person name="Kawakami B."/>
            <person name="Yamazaki M."/>
            <person name="Watanabe K."/>
            <person name="Kumagai A."/>
            <person name="Itakura S."/>
            <person name="Fukuzumi Y."/>
            <person name="Fujimori Y."/>
            <person name="Komiyama M."/>
            <person name="Tashiro H."/>
            <person name="Tanigami A."/>
            <person name="Fujiwara T."/>
            <person name="Ono T."/>
            <person name="Yamada K."/>
            <person name="Fujii Y."/>
            <person name="Ozaki K."/>
            <person name="Hirao M."/>
            <person name="Ohmori Y."/>
            <person name="Kawabata A."/>
            <person name="Hikiji T."/>
            <person name="Kobatake N."/>
            <person name="Inagaki H."/>
            <person name="Ikema Y."/>
            <person name="Okamoto S."/>
            <person name="Okitani R."/>
            <person name="Kawakami T."/>
            <person name="Noguchi S."/>
            <person name="Itoh T."/>
            <person name="Shigeta K."/>
            <person name="Senba T."/>
            <person name="Matsumura K."/>
            <person name="Nakajima Y."/>
            <person name="Mizuno T."/>
            <person name="Morinaga M."/>
            <person name="Sasaki M."/>
            <person name="Togashi T."/>
            <person name="Oyama M."/>
            <person name="Hata H."/>
            <person name="Watanabe M."/>
            <person name="Komatsu T."/>
            <person name="Mizushima-Sugano J."/>
            <person name="Satoh T."/>
            <person name="Shirai Y."/>
            <person name="Takahashi Y."/>
            <person name="Nakagawa K."/>
            <person name="Okumura K."/>
            <person name="Nagase T."/>
            <person name="Nomura N."/>
            <person name="Kikuchi H."/>
            <person name="Masuho Y."/>
            <person name="Yamashita R."/>
            <person name="Nakai K."/>
            <person name="Yada T."/>
            <person name="Nakamura Y."/>
            <person name="Ohara O."/>
            <person name="Isogai T."/>
            <person name="Sugano S."/>
        </authorList>
    </citation>
    <scope>NUCLEOTIDE SEQUENCE [LARGE SCALE MRNA] (ISOFORMS 1; 3; 4 AND 5)</scope>
    <source>
        <tissue>Placenta</tissue>
    </source>
</reference>
<reference key="7">
    <citation type="submission" date="2005-07" db="EMBL/GenBank/DDBJ databases">
        <authorList>
            <person name="Mural R.J."/>
            <person name="Istrail S."/>
            <person name="Sutton G.G."/>
            <person name="Florea L."/>
            <person name="Halpern A.L."/>
            <person name="Mobarry C.M."/>
            <person name="Lippert R."/>
            <person name="Walenz B."/>
            <person name="Shatkay H."/>
            <person name="Dew I."/>
            <person name="Miller J.R."/>
            <person name="Flanigan M.J."/>
            <person name="Edwards N.J."/>
            <person name="Bolanos R."/>
            <person name="Fasulo D."/>
            <person name="Halldorsson B.V."/>
            <person name="Hannenhalli S."/>
            <person name="Turner R."/>
            <person name="Yooseph S."/>
            <person name="Lu F."/>
            <person name="Nusskern D.R."/>
            <person name="Shue B.C."/>
            <person name="Zheng X.H."/>
            <person name="Zhong F."/>
            <person name="Delcher A.L."/>
            <person name="Huson D.H."/>
            <person name="Kravitz S.A."/>
            <person name="Mouchard L."/>
            <person name="Reinert K."/>
            <person name="Remington K.A."/>
            <person name="Clark A.G."/>
            <person name="Waterman M.S."/>
            <person name="Eichler E.E."/>
            <person name="Adams M.D."/>
            <person name="Hunkapiller M.W."/>
            <person name="Myers E.W."/>
            <person name="Venter J.C."/>
        </authorList>
    </citation>
    <scope>NUCLEOTIDE SEQUENCE [LARGE SCALE GENOMIC DNA]</scope>
</reference>
<reference key="8">
    <citation type="submission" date="1996-10" db="EMBL/GenBank/DDBJ databases">
        <authorList>
            <person name="Bentley D."/>
            <person name="Maggi L."/>
        </authorList>
    </citation>
    <scope>NUCLEOTIDE SEQUENCE [GENOMIC DNA] OF 117-815</scope>
</reference>
<reference key="9">
    <citation type="journal article" date="1999" name="Int. J. Cancer">
        <title>Antigens recognized by autologous antibody in patients with renal-cell carcinoma.</title>
        <authorList>
            <person name="Scanlan M.J."/>
            <person name="Gordan J.D."/>
            <person name="Williamson B."/>
            <person name="Stockert E."/>
            <person name="Bander N.H."/>
            <person name="Jongeneel C.V."/>
            <person name="Gure A.O."/>
            <person name="Jaeger D."/>
            <person name="Jaeger E."/>
            <person name="Knuth A."/>
            <person name="Chen Y.-T."/>
            <person name="Old L.J."/>
        </authorList>
    </citation>
    <scope>IDENTIFICATION AS A RENAL CANCER ANTIGEN</scope>
    <source>
        <tissue>Renal cell carcinoma</tissue>
    </source>
</reference>
<reference key="10">
    <citation type="journal article" date="2002" name="Apoptosis">
        <title>Candidate tumour suppressor LUCA-15 can regulate multiple apoptotic pathways.</title>
        <authorList>
            <person name="Mourtada-Maarabouni M."/>
            <person name="Sutherland L.C."/>
            <person name="Williams G.T."/>
        </authorList>
    </citation>
    <scope>FUNCTION</scope>
</reference>
<reference key="11">
    <citation type="journal article" date="2003" name="Genes Cells">
        <title>Simultaneous acceleration of the cell cycle and suppression of apoptosis by splice variant delta-6 of the candidate tumour suppressor LUCA-15/RBM5.</title>
        <authorList>
            <person name="Mourtada-Maarabouni M."/>
            <person name="Sutherland L.C."/>
            <person name="Meredith J.M."/>
            <person name="Williams G.T."/>
        </authorList>
    </citation>
    <scope>ALTERNATIVE SPLICING (ISOFORM 5)</scope>
    <scope>FUNCTION</scope>
</reference>
<reference key="12">
    <citation type="journal article" date="2004" name="Apoptosis">
        <title>LUCA-15/RBM5, a putative tumour suppressor, enhances multiple receptor-initiated death signals.</title>
        <authorList>
            <person name="Rintala-Maki N.D."/>
            <person name="Sutherland L.C."/>
        </authorList>
    </citation>
    <scope>FUNCTION</scope>
</reference>
<reference key="13">
    <citation type="journal article" date="2006" name="Cancer Res.">
        <title>3p21.3 tumor suppressor gene H37/Luca15/RBM5 inhibits growth of human lung cancer cells through cell cycle arrest and apoptosis.</title>
        <authorList>
            <person name="Oh J.J."/>
            <person name="Razfar A."/>
            <person name="Delgado I."/>
            <person name="Reed R.A."/>
            <person name="Malkina A."/>
            <person name="Boctor B."/>
            <person name="Slamon D.J."/>
        </authorList>
    </citation>
    <scope>FUNCTION</scope>
</reference>
<reference key="14">
    <citation type="journal article" date="2006" name="Cell">
        <title>Global, in vivo, and site-specific phosphorylation dynamics in signaling networks.</title>
        <authorList>
            <person name="Olsen J.V."/>
            <person name="Blagoev B."/>
            <person name="Gnad F."/>
            <person name="Macek B."/>
            <person name="Kumar C."/>
            <person name="Mortensen P."/>
            <person name="Mann M."/>
        </authorList>
    </citation>
    <scope>PHOSPHORYLATION [LARGE SCALE ANALYSIS] AT SER-624</scope>
    <scope>IDENTIFICATION BY MASS SPECTROMETRY [LARGE SCALE ANALYSIS]</scope>
    <source>
        <tissue>Cervix carcinoma</tissue>
    </source>
</reference>
<reference key="15">
    <citation type="journal article" date="2007" name="EMBO J.">
        <title>Composition and three-dimensional EM structure of double affinity-purified, human prespliceosomal A complexes.</title>
        <authorList>
            <person name="Behzadnia N."/>
            <person name="Golas M.M."/>
            <person name="Hartmuth K."/>
            <person name="Sander B."/>
            <person name="Kastner B."/>
            <person name="Deckert J."/>
            <person name="Dube P."/>
            <person name="Will C.L."/>
            <person name="Urlaub H."/>
            <person name="Stark H."/>
            <person name="Luehrmann R."/>
        </authorList>
    </citation>
    <scope>IDENTIFICATION BY MASS SPECTROMETRY</scope>
    <scope>IDENTIFICATION IN THE SPLICEOSOMAL A COMPLEX</scope>
</reference>
<reference key="16">
    <citation type="journal article" date="2008" name="J. Proteome Res.">
        <title>Combining protein-based IMAC, peptide-based IMAC, and MudPIT for efficient phosphoproteomic analysis.</title>
        <authorList>
            <person name="Cantin G.T."/>
            <person name="Yi W."/>
            <person name="Lu B."/>
            <person name="Park S.K."/>
            <person name="Xu T."/>
            <person name="Lee J.-D."/>
            <person name="Yates J.R. III"/>
        </authorList>
    </citation>
    <scope>PHOSPHORYLATION [LARGE SCALE ANALYSIS] AT SER-624</scope>
    <scope>IDENTIFICATION BY MASS SPECTROMETRY [LARGE SCALE ANALYSIS]</scope>
    <source>
        <tissue>Cervix carcinoma</tissue>
    </source>
</reference>
<reference key="17">
    <citation type="journal article" date="2008" name="Mol. Cell">
        <title>Kinase-selective enrichment enables quantitative phosphoproteomics of the kinome across the cell cycle.</title>
        <authorList>
            <person name="Daub H."/>
            <person name="Olsen J.V."/>
            <person name="Bairlein M."/>
            <person name="Gnad F."/>
            <person name="Oppermann F.S."/>
            <person name="Korner R."/>
            <person name="Greff Z."/>
            <person name="Keri G."/>
            <person name="Stemmann O."/>
            <person name="Mann M."/>
        </authorList>
    </citation>
    <scope>PHOSPHORYLATION [LARGE SCALE ANALYSIS] AT SER-624</scope>
    <scope>IDENTIFICATION BY MASS SPECTROMETRY [LARGE SCALE ANALYSIS]</scope>
    <source>
        <tissue>Cervix carcinoma</tissue>
    </source>
</reference>
<reference key="18">
    <citation type="journal article" date="2008" name="Mol. Cell">
        <title>RBM5/Luca-15/H37 regulates Fas alternative splice site pairing after exon definition.</title>
        <authorList>
            <person name="Bonnal S."/>
            <person name="Martinez C."/>
            <person name="Foerch P."/>
            <person name="Bachi A."/>
            <person name="Wilm M."/>
            <person name="Valcarcel J."/>
        </authorList>
    </citation>
    <scope>FUNCTION</scope>
    <scope>INTERACTION WITH ACIN1; PRPF8; SFRS3; SNRPB; SNRPN; SNRNP70; SNRNP200 AND U2AF2</scope>
    <scope>SUBCELLULAR LOCATION</scope>
</reference>
<reference key="19">
    <citation type="journal article" date="2008" name="Proc. Natl. Acad. Sci. U.S.A.">
        <title>A quantitative atlas of mitotic phosphorylation.</title>
        <authorList>
            <person name="Dephoure N."/>
            <person name="Zhou C."/>
            <person name="Villen J."/>
            <person name="Beausoleil S.A."/>
            <person name="Bakalarski C.E."/>
            <person name="Elledge S.J."/>
            <person name="Gygi S.P."/>
        </authorList>
    </citation>
    <scope>PHOSPHORYLATION [LARGE SCALE ANALYSIS] AT SER-621 AND SER-624</scope>
    <scope>IDENTIFICATION BY MASS SPECTROMETRY [LARGE SCALE ANALYSIS]</scope>
    <source>
        <tissue>Cervix carcinoma</tissue>
    </source>
</reference>
<reference key="20">
    <citation type="journal article" date="2008" name="Proc. Natl. Acad. Sci. U.S.A.">
        <title>Up-regulation of the proapoptotic caspase 2 splicing isoform by a candidate tumor suppressor, RBM5.</title>
        <authorList>
            <person name="Fushimi K."/>
            <person name="Ray P."/>
            <person name="Kar A."/>
            <person name="Wang L."/>
            <person name="Sutherland L.C."/>
            <person name="Wu J.Y."/>
        </authorList>
    </citation>
    <scope>FUNCTION</scope>
    <scope>RNA-BINDING</scope>
</reference>
<reference key="21">
    <citation type="journal article" date="2009" name="Anal. Chem.">
        <title>Lys-N and trypsin cover complementary parts of the phosphoproteome in a refined SCX-based approach.</title>
        <authorList>
            <person name="Gauci S."/>
            <person name="Helbig A.O."/>
            <person name="Slijper M."/>
            <person name="Krijgsveld J."/>
            <person name="Heck A.J."/>
            <person name="Mohammed S."/>
        </authorList>
    </citation>
    <scope>IDENTIFICATION BY MASS SPECTROMETRY [LARGE SCALE ANALYSIS]</scope>
</reference>
<reference key="22">
    <citation type="journal article" date="2009" name="Sci. Signal.">
        <title>Quantitative phosphoproteomic analysis of T cell receptor signaling reveals system-wide modulation of protein-protein interactions.</title>
        <authorList>
            <person name="Mayya V."/>
            <person name="Lundgren D.H."/>
            <person name="Hwang S.-I."/>
            <person name="Rezaul K."/>
            <person name="Wu L."/>
            <person name="Eng J.K."/>
            <person name="Rodionov V."/>
            <person name="Han D.K."/>
        </authorList>
    </citation>
    <scope>PHOSPHORYLATION [LARGE SCALE ANALYSIS] AT SER-621 AND SER-624</scope>
    <scope>IDENTIFICATION BY MASS SPECTROMETRY [LARGE SCALE ANALYSIS]</scope>
    <source>
        <tissue>Leukemic T-cell</tissue>
    </source>
</reference>
<reference key="23">
    <citation type="journal article" date="2010" name="Sci. Signal.">
        <title>Quantitative phosphoproteomics reveals widespread full phosphorylation site occupancy during mitosis.</title>
        <authorList>
            <person name="Olsen J.V."/>
            <person name="Vermeulen M."/>
            <person name="Santamaria A."/>
            <person name="Kumar C."/>
            <person name="Miller M.L."/>
            <person name="Jensen L.J."/>
            <person name="Gnad F."/>
            <person name="Cox J."/>
            <person name="Jensen T.S."/>
            <person name="Nigg E.A."/>
            <person name="Brunak S."/>
            <person name="Mann M."/>
        </authorList>
    </citation>
    <scope>PHOSPHORYLATION [LARGE SCALE ANALYSIS] AT SER-624</scope>
    <scope>IDENTIFICATION BY MASS SPECTROMETRY [LARGE SCALE ANALYSIS]</scope>
    <source>
        <tissue>Cervix carcinoma</tissue>
    </source>
</reference>
<reference key="24">
    <citation type="journal article" date="2011" name="BMC Syst. Biol.">
        <title>Initial characterization of the human central proteome.</title>
        <authorList>
            <person name="Burkard T.R."/>
            <person name="Planyavsky M."/>
            <person name="Kaupe I."/>
            <person name="Breitwieser F.P."/>
            <person name="Buerckstuemmer T."/>
            <person name="Bennett K.L."/>
            <person name="Superti-Furga G."/>
            <person name="Colinge J."/>
        </authorList>
    </citation>
    <scope>IDENTIFICATION BY MASS SPECTROMETRY [LARGE SCALE ANALYSIS]</scope>
</reference>
<reference key="25">
    <citation type="journal article" date="2011" name="J. Mol. Biol.">
        <title>Characterization of a family of RanBP2-type zinc fingers that can recognize single-stranded RNA.</title>
        <authorList>
            <person name="Nguyen C.D."/>
            <person name="Mansfield R.E."/>
            <person name="Leung W."/>
            <person name="Vaz P.M."/>
            <person name="Loughlin F.E."/>
            <person name="Grant R.P."/>
            <person name="Mackay J.P."/>
        </authorList>
    </citation>
    <scope>FUNCTION</scope>
</reference>
<reference key="26">
    <citation type="journal article" date="2011" name="Sci. Signal.">
        <title>System-wide temporal characterization of the proteome and phosphoproteome of human embryonic stem cell differentiation.</title>
        <authorList>
            <person name="Rigbolt K.T."/>
            <person name="Prokhorova T.A."/>
            <person name="Akimov V."/>
            <person name="Henningsen J."/>
            <person name="Johansen P.T."/>
            <person name="Kratchmarova I."/>
            <person name="Kassem M."/>
            <person name="Mann M."/>
            <person name="Olsen J.V."/>
            <person name="Blagoev B."/>
        </authorList>
    </citation>
    <scope>PHOSPHORYLATION [LARGE SCALE ANALYSIS] AT SER-624</scope>
    <scope>IDENTIFICATION BY MASS SPECTROMETRY [LARGE SCALE ANALYSIS]</scope>
</reference>
<reference key="27">
    <citation type="journal article" date="2013" name="J. Proteome Res.">
        <title>Toward a comprehensive characterization of a human cancer cell phosphoproteome.</title>
        <authorList>
            <person name="Zhou H."/>
            <person name="Di Palma S."/>
            <person name="Preisinger C."/>
            <person name="Peng M."/>
            <person name="Polat A.N."/>
            <person name="Heck A.J."/>
            <person name="Mohammed S."/>
        </authorList>
    </citation>
    <scope>PHOSPHORYLATION [LARGE SCALE ANALYSIS] AT SER-18; SER-59; SER-69; SER-72; SER-78 AND SER-624</scope>
    <scope>IDENTIFICATION BY MASS SPECTROMETRY [LARGE SCALE ANALYSIS]</scope>
    <source>
        <tissue>Cervix carcinoma</tissue>
        <tissue>Erythroleukemia</tissue>
    </source>
</reference>
<reference key="28">
    <citation type="journal article" date="2014" name="J. Proteomics">
        <title>An enzyme assisted RP-RPLC approach for in-depth analysis of human liver phosphoproteome.</title>
        <authorList>
            <person name="Bian Y."/>
            <person name="Song C."/>
            <person name="Cheng K."/>
            <person name="Dong M."/>
            <person name="Wang F."/>
            <person name="Huang J."/>
            <person name="Sun D."/>
            <person name="Wang L."/>
            <person name="Ye M."/>
            <person name="Zou H."/>
        </authorList>
    </citation>
    <scope>PHOSPHORYLATION [LARGE SCALE ANALYSIS] AT SER-444 AND SER-624</scope>
    <scope>IDENTIFICATION BY MASS SPECTROMETRY [LARGE SCALE ANALYSIS]</scope>
    <source>
        <tissue>Liver</tissue>
    </source>
</reference>
<sequence>MGSDKRVSRTERSGRYGSIIDRDDRDERESRSRRRDSDYKRSSDDRRGDRYDDYRDYDSPERERERRNSDRSEDGYHSDGDYGEHDYRHDISDERESKTIMLRGLPITITESDIREMMESFEGPQPADVRLMKRKTGVSRGFAFVEFYHLQDATSWMEANQKKLVIQGKHIAMHYSNPRPKFEDWLCNKCCLNNFRKRLKCFRCGADKFDSEQEVPPGTTESVQSVDYYCDTIILRNIAPHTVVDSIMTALSPYASLAVNNIRLIKDKQTQQNRGFAFVQLSSAMDASQLLQILQSLHPPLKIDGKTIGVDFAKSARKDLVLSDGNRVSAFSVASTAIAAAQWSSTQSQSGEGGSVDYSYLQPGQDGYAQYAQYSQDYQQFYQQQAGGLESDASSASGTAVTTTSAAVVSQSPQLYNQTSNPPGSPTEEAQPSTSTSTQAPAASPTGVVPGTKYAVPDTSTYQYDESSGYYYDPTTGLYYDPNSQYYYNSLTQQYLYWDGEKETYVPAAESSSHQQSGLPPAKEGKEKKEKPKSKTAQQIAKDMERWAKSLNKQKENFKNSFQPVNSLREEERRESAAADAGFALFEKKGALAERQQLIPELVRNGDEENPLKRGLVAAYSGDSDNEEELVERLESEEEKLADWKKMACLLCRRQFPNKDALVRHQQLSDLHKQNMDIYRRSRLSEQELEALELREREMKYRDRAAERREKYGIPEPPEPKRKKQFDAGTVNYEQPTKDGIDHSNIGNKMLQAMGWREGSGLGRKCQGITAPIEAQVRLKGAGLGAKGSAYGLSGADSYKDAVRKAMFARFTEME</sequence>
<gene>
    <name type="primary">RBM5</name>
    <name type="ORF">H37</name>
    <name type="ORF">LUCA15</name>
</gene>
<proteinExistence type="evidence at protein level"/>
<comment type="function">
    <text evidence="6 7 8 9 10 12 13 14">Component of the spliceosome A complex. Binds to ssRNA containing the consensus sequence 5'-AGGUAA-3' (PubMed:21256132). Regulates alternative splicing of a number of mRNAs. May modulate splice site pairing after recruitment of the U1 and U2 snRNPs to the 5' and 3' splice sites of the intron. May both positively and negatively regulate apoptosis by regulating the alternative splicing of several genes involved in this process, including FAS and CASP2/caspase-2. In the case of FAS, promotes exclusion of exon 6 thereby producing a soluble form of FAS that inhibits apoptosis. In the case of CASP2/caspase-2, promotes exclusion of exon 9 thereby producing a catalytically active form of CASP2/Caspase-2 that induces apoptosis.</text>
</comment>
<comment type="subunit">
    <text evidence="11 13">Component of the spliceosome A complex (also known as the prespliceosome). Appears to dissociate from the spliceosome upon formation of the spliceosome B complex (also known as the precatalytic spliceosome), in which the heterotrimeric U4/U6.U5 snRNPs are bound. Interacts with U2AF2; this interaction is direct. Also interacts with ACIN1, PRPF8, SFRS3, SNRPB, SNRPN, SNRNP70 and SNRNP200; these interactions may be indirect.</text>
</comment>
<comment type="interaction">
    <interactant intactId="EBI-714003">
        <id>P52756</id>
    </interactant>
    <interactant intactId="EBI-1222467">
        <id>P02649</id>
        <label>APOE</label>
    </interactant>
    <organismsDiffer>false</organismsDiffer>
    <experiments>3</experiments>
</comment>
<comment type="interaction">
    <interactant intactId="EBI-714003">
        <id>P52756</id>
    </interactant>
    <interactant intactId="EBI-1049597">
        <id>P27797</id>
        <label>CALR</label>
    </interactant>
    <organismsDiffer>false</organismsDiffer>
    <experiments>3</experiments>
</comment>
<comment type="interaction">
    <interactant intactId="EBI-714003">
        <id>P52756</id>
    </interactant>
    <interactant intactId="EBI-1237044">
        <id>O43143</id>
        <label>DHX15</label>
    </interactant>
    <organismsDiffer>false</organismsDiffer>
    <experiments>15</experiments>
</comment>
<comment type="interaction">
    <interactant intactId="EBI-714003">
        <id>P52756</id>
    </interactant>
    <interactant intactId="EBI-351007">
        <id>P36957</id>
        <label>DLST</label>
    </interactant>
    <organismsDiffer>false</organismsDiffer>
    <experiments>3</experiments>
</comment>
<comment type="interaction">
    <interactant intactId="EBI-714003">
        <id>P52756</id>
    </interactant>
    <interactant intactId="EBI-466029">
        <id>P42858</id>
        <label>HTT</label>
    </interactant>
    <organismsDiffer>false</organismsDiffer>
    <experiments>6</experiments>
</comment>
<comment type="interaction">
    <interactant intactId="EBI-714003">
        <id>P52756</id>
    </interactant>
    <interactant intactId="EBI-2432309">
        <id>Q92876</id>
        <label>KLK6</label>
    </interactant>
    <organismsDiffer>false</organismsDiffer>
    <experiments>3</experiments>
</comment>
<comment type="interaction">
    <interactant intactId="EBI-714003">
        <id>P52756</id>
    </interactant>
    <interactant intactId="EBI-2864512">
        <id>P50221</id>
        <label>MEOX1</label>
    </interactant>
    <organismsDiffer>false</organismsDiffer>
    <experiments>4</experiments>
</comment>
<comment type="interaction">
    <interactant intactId="EBI-714003">
        <id>P52756</id>
    </interactant>
    <interactant intactId="EBI-16439278">
        <id>Q6FHY5</id>
        <label>MEOX2</label>
    </interactant>
    <organismsDiffer>false</organismsDiffer>
    <experiments>6</experiments>
</comment>
<comment type="interaction">
    <interactant intactId="EBI-714003">
        <id>P52756</id>
    </interactant>
    <interactant intactId="EBI-13315321">
        <id>O95822-2</id>
        <label>MLYCD</label>
    </interactant>
    <organismsDiffer>false</organismsDiffer>
    <experiments>4</experiments>
</comment>
<comment type="interaction">
    <interactant intactId="EBI-714003">
        <id>P52756</id>
    </interactant>
    <interactant intactId="EBI-1055945">
        <id>Q8TDX7</id>
        <label>NEK7</label>
    </interactant>
    <organismsDiffer>false</organismsDiffer>
    <experiments>3</experiments>
</comment>
<comment type="interaction">
    <interactant intactId="EBI-714003">
        <id>P52756</id>
    </interactant>
    <interactant intactId="EBI-395746">
        <id>Q9UMS4</id>
        <label>PRPF19</label>
    </interactant>
    <organismsDiffer>false</organismsDiffer>
    <experiments>8</experiments>
</comment>
<comment type="interaction">
    <interactant intactId="EBI-714003">
        <id>P52756</id>
    </interactant>
    <interactant intactId="EBI-296151">
        <id>P37173</id>
        <label>TGFBR2</label>
    </interactant>
    <organismsDiffer>false</organismsDiffer>
    <experiments>3</experiments>
</comment>
<comment type="interaction">
    <interactant intactId="EBI-714003">
        <id>P52756</id>
    </interactant>
    <interactant intactId="EBI-742339">
        <id>P26368</id>
        <label>U2AF2</label>
    </interactant>
    <organismsDiffer>false</organismsDiffer>
    <experiments>3</experiments>
</comment>
<comment type="interaction">
    <interactant intactId="EBI-714003">
        <id>P52756</id>
    </interactant>
    <interactant intactId="EBI-310697">
        <id>O15042</id>
        <label>U2SURP</label>
    </interactant>
    <organismsDiffer>false</organismsDiffer>
    <experiments>2</experiments>
</comment>
<comment type="subcellular location">
    <subcellularLocation>
        <location evidence="13">Nucleus</location>
    </subcellularLocation>
</comment>
<comment type="alternative products">
    <event type="alternative splicing"/>
    <isoform>
        <id>P52756-1</id>
        <name>1</name>
        <sequence type="displayed"/>
    </isoform>
    <isoform>
        <id>P52756-2</id>
        <name>2</name>
        <sequence type="described" ref="VSP_037432 VSP_037434"/>
    </isoform>
    <isoform>
        <id>P52756-3</id>
        <name>3</name>
        <sequence type="described" ref="VSP_037429 VSP_037430"/>
    </isoform>
    <isoform>
        <id>P52756-4</id>
        <name>4</name>
        <sequence type="described" ref="VSP_037433"/>
    </isoform>
    <isoform>
        <id>P52756-5</id>
        <name>5</name>
        <name>delta-6</name>
        <sequence type="described" ref="VSP_037431 VSP_037435"/>
    </isoform>
</comment>
<comment type="tissue specificity">
    <text>Isoform 5 is widely expressed in normal tissues and is expressed at increased levels in T-leukemic cell lines.</text>
</comment>
<comment type="similarity">
    <text evidence="17">Belongs to the RBM5/RBM10 family.</text>
</comment>
<comment type="sequence caution" evidence="17">
    <conflict type="erroneous translation">
        <sequence resource="EMBL-CDS" id="BAG59728"/>
    </conflict>
    <text>Wrong choice of CDS.</text>
</comment>
<comment type="sequence caution" evidence="17">
    <conflict type="erroneous translation">
        <sequence resource="EMBL-CDS" id="BAG59871"/>
    </conflict>
    <text>Wrong choice of CDS.</text>
</comment>
<comment type="sequence caution" evidence="17">
    <conflict type="erroneous translation">
        <sequence resource="EMBL-CDS" id="BAG63975"/>
    </conflict>
    <text>Wrong choice of CDS.</text>
</comment>
<comment type="online information" name="Atlas of Genetics and Cytogenetics in Oncology and Haematology">
    <link uri="https://atlasgeneticsoncology.org/gene/42069/RBM5"/>
</comment>
<name>RBM5_HUMAN</name>
<dbReference type="EMBL" id="U23946">
    <property type="protein sequence ID" value="AAA99715.1"/>
    <property type="molecule type" value="mRNA"/>
</dbReference>
<dbReference type="EMBL" id="AF091263">
    <property type="protein sequence ID" value="AAD04159.1"/>
    <property type="molecule type" value="mRNA"/>
</dbReference>
<dbReference type="EMBL" id="AF103802">
    <property type="protein sequence ID" value="AAF02422.2"/>
    <property type="molecule type" value="mRNA"/>
</dbReference>
<dbReference type="EMBL" id="AF107493">
    <property type="protein sequence ID" value="AAF99551.1"/>
    <property type="molecule type" value="mRNA"/>
</dbReference>
<dbReference type="EMBL" id="AK297249">
    <property type="protein sequence ID" value="BAG59728.1"/>
    <property type="status" value="ALT_SEQ"/>
    <property type="molecule type" value="mRNA"/>
</dbReference>
<dbReference type="EMBL" id="AK297445">
    <property type="protein sequence ID" value="BAG59871.1"/>
    <property type="status" value="ALT_SEQ"/>
    <property type="molecule type" value="mRNA"/>
</dbReference>
<dbReference type="EMBL" id="AK302766">
    <property type="protein sequence ID" value="BAG63975.1"/>
    <property type="status" value="ALT_SEQ"/>
    <property type="molecule type" value="mRNA"/>
</dbReference>
<dbReference type="EMBL" id="AK314032">
    <property type="protein sequence ID" value="BAG36742.1"/>
    <property type="molecule type" value="mRNA"/>
</dbReference>
<dbReference type="EMBL" id="CH471055">
    <property type="protein sequence ID" value="EAW65040.1"/>
    <property type="molecule type" value="Genomic_DNA"/>
</dbReference>
<dbReference type="EMBL" id="CH471055">
    <property type="protein sequence ID" value="EAW65041.1"/>
    <property type="molecule type" value="Genomic_DNA"/>
</dbReference>
<dbReference type="EMBL" id="U73168">
    <property type="protein sequence ID" value="AAB42216.1"/>
    <property type="molecule type" value="Genomic_DNA"/>
</dbReference>
<dbReference type="CCDS" id="CCDS2810.1">
    <molecule id="P52756-1"/>
</dbReference>
<dbReference type="RefSeq" id="NP_005769.1">
    <molecule id="P52756-1"/>
    <property type="nucleotide sequence ID" value="NM_005778.4"/>
</dbReference>
<dbReference type="RefSeq" id="XP_016860992.1">
    <property type="nucleotide sequence ID" value="XM_017005503.1"/>
</dbReference>
<dbReference type="PDB" id="2LK0">
    <property type="method" value="NMR"/>
    <property type="chains" value="A=181-210"/>
</dbReference>
<dbReference type="PDB" id="2LK1">
    <property type="method" value="NMR"/>
    <property type="chains" value="A=181-210"/>
</dbReference>
<dbReference type="PDB" id="2LKZ">
    <property type="method" value="NMR"/>
    <property type="chains" value="A=231-316"/>
</dbReference>
<dbReference type="PDB" id="5MF9">
    <property type="method" value="NMR"/>
    <property type="chains" value="A=451-511"/>
</dbReference>
<dbReference type="PDB" id="5MFY">
    <property type="method" value="NMR"/>
    <property type="chains" value="A=451-511"/>
</dbReference>
<dbReference type="PDB" id="7PCV">
    <property type="method" value="X-ray"/>
    <property type="resolution" value="2.42 A"/>
    <property type="chains" value="A/B=94-210"/>
</dbReference>
<dbReference type="PDB" id="7PDV">
    <property type="method" value="X-ray"/>
    <property type="resolution" value="3.49 A"/>
    <property type="chains" value="A/C/E/G=94-210"/>
</dbReference>
<dbReference type="PDBsum" id="2LK0"/>
<dbReference type="PDBsum" id="2LK1"/>
<dbReference type="PDBsum" id="2LKZ"/>
<dbReference type="PDBsum" id="5MF9"/>
<dbReference type="PDBsum" id="5MFY"/>
<dbReference type="PDBsum" id="7PCV"/>
<dbReference type="PDBsum" id="7PDV"/>
<dbReference type="BMRB" id="P52756"/>
<dbReference type="SASBDB" id="P52756"/>
<dbReference type="SMR" id="P52756"/>
<dbReference type="BioGRID" id="115480">
    <property type="interactions" value="192"/>
</dbReference>
<dbReference type="CORUM" id="P52756"/>
<dbReference type="DIP" id="DIP-47277N"/>
<dbReference type="FunCoup" id="P52756">
    <property type="interactions" value="4710"/>
</dbReference>
<dbReference type="IntAct" id="P52756">
    <property type="interactions" value="111"/>
</dbReference>
<dbReference type="MINT" id="P52756"/>
<dbReference type="STRING" id="9606.ENSP00000343054"/>
<dbReference type="GlyGen" id="P52756">
    <property type="glycosylation" value="1 site, 1 O-linked glycan (1 site)"/>
</dbReference>
<dbReference type="iPTMnet" id="P52756"/>
<dbReference type="PhosphoSitePlus" id="P52756"/>
<dbReference type="BioMuta" id="RBM5"/>
<dbReference type="DMDM" id="13124794"/>
<dbReference type="jPOST" id="P52756"/>
<dbReference type="MassIVE" id="P52756"/>
<dbReference type="PaxDb" id="9606-ENSP00000343054"/>
<dbReference type="PeptideAtlas" id="P52756"/>
<dbReference type="ProteomicsDB" id="56524">
    <molecule id="P52756-1"/>
</dbReference>
<dbReference type="ProteomicsDB" id="56525">
    <molecule id="P52756-2"/>
</dbReference>
<dbReference type="ProteomicsDB" id="56526">
    <molecule id="P52756-3"/>
</dbReference>
<dbReference type="ProteomicsDB" id="56527">
    <molecule id="P52756-4"/>
</dbReference>
<dbReference type="ProteomicsDB" id="56528">
    <molecule id="P52756-5"/>
</dbReference>
<dbReference type="Pumba" id="P52756"/>
<dbReference type="Antibodypedia" id="1962">
    <property type="antibodies" value="254 antibodies from 30 providers"/>
</dbReference>
<dbReference type="DNASU" id="10181"/>
<dbReference type="Ensembl" id="ENST00000347869.8">
    <molecule id="P52756-1"/>
    <property type="protein sequence ID" value="ENSP00000343054.3"/>
    <property type="gene ID" value="ENSG00000003756.17"/>
</dbReference>
<dbReference type="Ensembl" id="ENST00000469838.5">
    <molecule id="P52756-2"/>
    <property type="protein sequence ID" value="ENSP00000419534.1"/>
    <property type="gene ID" value="ENSG00000003756.17"/>
</dbReference>
<dbReference type="GeneID" id="10181"/>
<dbReference type="KEGG" id="hsa:10181"/>
<dbReference type="MANE-Select" id="ENST00000347869.8">
    <property type="protein sequence ID" value="ENSP00000343054.3"/>
    <property type="RefSeq nucleotide sequence ID" value="NM_005778.4"/>
    <property type="RefSeq protein sequence ID" value="NP_005769.1"/>
</dbReference>
<dbReference type="UCSC" id="uc003cyf.4">
    <molecule id="P52756-1"/>
    <property type="organism name" value="human"/>
</dbReference>
<dbReference type="AGR" id="HGNC:9902"/>
<dbReference type="CTD" id="10181"/>
<dbReference type="DisGeNET" id="10181"/>
<dbReference type="GeneCards" id="RBM5"/>
<dbReference type="HGNC" id="HGNC:9902">
    <property type="gene designation" value="RBM5"/>
</dbReference>
<dbReference type="HPA" id="ENSG00000003756">
    <property type="expression patterns" value="Low tissue specificity"/>
</dbReference>
<dbReference type="MIM" id="606884">
    <property type="type" value="gene"/>
</dbReference>
<dbReference type="neXtProt" id="NX_P52756"/>
<dbReference type="OpenTargets" id="ENSG00000003756"/>
<dbReference type="PharmGKB" id="PA34267"/>
<dbReference type="VEuPathDB" id="HostDB:ENSG00000003756"/>
<dbReference type="eggNOG" id="KOG0154">
    <property type="taxonomic scope" value="Eukaryota"/>
</dbReference>
<dbReference type="GeneTree" id="ENSGT00940000156617"/>
<dbReference type="HOGENOM" id="CLU_010527_0_0_1"/>
<dbReference type="InParanoid" id="P52756"/>
<dbReference type="OMA" id="MYDDRSP"/>
<dbReference type="OrthoDB" id="29221at2759"/>
<dbReference type="PAN-GO" id="P52756">
    <property type="GO annotations" value="3 GO annotations based on evolutionary models"/>
</dbReference>
<dbReference type="PhylomeDB" id="P52756"/>
<dbReference type="TreeFam" id="TF315789"/>
<dbReference type="PathwayCommons" id="P52756"/>
<dbReference type="Reactome" id="R-HSA-72163">
    <property type="pathway name" value="mRNA Splicing - Major Pathway"/>
</dbReference>
<dbReference type="SignaLink" id="P52756"/>
<dbReference type="BioGRID-ORCS" id="10181">
    <property type="hits" value="84 hits in 1166 CRISPR screens"/>
</dbReference>
<dbReference type="ChiTaRS" id="RBM5">
    <property type="organism name" value="human"/>
</dbReference>
<dbReference type="EvolutionaryTrace" id="P52756"/>
<dbReference type="GeneWiki" id="RBM5"/>
<dbReference type="GenomeRNAi" id="10181"/>
<dbReference type="Pharos" id="P52756">
    <property type="development level" value="Tbio"/>
</dbReference>
<dbReference type="PRO" id="PR:P52756"/>
<dbReference type="Proteomes" id="UP000005640">
    <property type="component" value="Chromosome 3"/>
</dbReference>
<dbReference type="RNAct" id="P52756">
    <property type="molecule type" value="protein"/>
</dbReference>
<dbReference type="Bgee" id="ENSG00000003756">
    <property type="expression patterns" value="Expressed in right uterine tube and 201 other cell types or tissues"/>
</dbReference>
<dbReference type="ExpressionAtlas" id="P52756">
    <property type="expression patterns" value="baseline and differential"/>
</dbReference>
<dbReference type="GO" id="GO:0005829">
    <property type="term" value="C:cytosol"/>
    <property type="evidence" value="ECO:0000314"/>
    <property type="project" value="HPA"/>
</dbReference>
<dbReference type="GO" id="GO:0043231">
    <property type="term" value="C:intracellular membrane-bounded organelle"/>
    <property type="evidence" value="ECO:0000314"/>
    <property type="project" value="HPA"/>
</dbReference>
<dbReference type="GO" id="GO:0005654">
    <property type="term" value="C:nucleoplasm"/>
    <property type="evidence" value="ECO:0000314"/>
    <property type="project" value="HPA"/>
</dbReference>
<dbReference type="GO" id="GO:0005634">
    <property type="term" value="C:nucleus"/>
    <property type="evidence" value="ECO:0000314"/>
    <property type="project" value="UniProtKB"/>
</dbReference>
<dbReference type="GO" id="GO:0005681">
    <property type="term" value="C:spliceosomal complex"/>
    <property type="evidence" value="ECO:0000304"/>
    <property type="project" value="UniProtKB"/>
</dbReference>
<dbReference type="GO" id="GO:0003677">
    <property type="term" value="F:DNA binding"/>
    <property type="evidence" value="ECO:0000304"/>
    <property type="project" value="ProtInc"/>
</dbReference>
<dbReference type="GO" id="GO:0003729">
    <property type="term" value="F:mRNA binding"/>
    <property type="evidence" value="ECO:0000314"/>
    <property type="project" value="UniProtKB"/>
</dbReference>
<dbReference type="GO" id="GO:0003723">
    <property type="term" value="F:RNA binding"/>
    <property type="evidence" value="ECO:0007005"/>
    <property type="project" value="UniProtKB"/>
</dbReference>
<dbReference type="GO" id="GO:0008270">
    <property type="term" value="F:zinc ion binding"/>
    <property type="evidence" value="ECO:0007669"/>
    <property type="project" value="UniProtKB-KW"/>
</dbReference>
<dbReference type="GO" id="GO:0006915">
    <property type="term" value="P:apoptotic process"/>
    <property type="evidence" value="ECO:0007669"/>
    <property type="project" value="UniProtKB-KW"/>
</dbReference>
<dbReference type="GO" id="GO:0000398">
    <property type="term" value="P:mRNA splicing, via spliceosome"/>
    <property type="evidence" value="ECO:0000318"/>
    <property type="project" value="GO_Central"/>
</dbReference>
<dbReference type="GO" id="GO:0008285">
    <property type="term" value="P:negative regulation of cell population proliferation"/>
    <property type="evidence" value="ECO:0000304"/>
    <property type="project" value="UniProtKB"/>
</dbReference>
<dbReference type="GO" id="GO:0043065">
    <property type="term" value="P:positive regulation of apoptotic process"/>
    <property type="evidence" value="ECO:0000314"/>
    <property type="project" value="UniProtKB"/>
</dbReference>
<dbReference type="GO" id="GO:0000381">
    <property type="term" value="P:regulation of alternative mRNA splicing, via spliceosome"/>
    <property type="evidence" value="ECO:0000314"/>
    <property type="project" value="UniProtKB"/>
</dbReference>
<dbReference type="GO" id="GO:0006396">
    <property type="term" value="P:RNA processing"/>
    <property type="evidence" value="ECO:0000304"/>
    <property type="project" value="ProtInc"/>
</dbReference>
<dbReference type="GO" id="GO:0000245">
    <property type="term" value="P:spliceosomal complex assembly"/>
    <property type="evidence" value="ECO:0000314"/>
    <property type="project" value="UniProtKB"/>
</dbReference>
<dbReference type="CDD" id="cd16168">
    <property type="entry name" value="OCRE_RBM5"/>
    <property type="match status" value="1"/>
</dbReference>
<dbReference type="CDD" id="cd12752">
    <property type="entry name" value="RRM1_RBM5"/>
    <property type="match status" value="1"/>
</dbReference>
<dbReference type="CDD" id="cd12755">
    <property type="entry name" value="RRM2_RBM5"/>
    <property type="match status" value="1"/>
</dbReference>
<dbReference type="FunFam" id="3.30.70.330:FF:000515">
    <property type="entry name" value="RNA-binding motif protein 5"/>
    <property type="match status" value="1"/>
</dbReference>
<dbReference type="FunFam" id="3.30.70.330:FF:000114">
    <property type="entry name" value="RNA-binding protein 10 isoform X1"/>
    <property type="match status" value="1"/>
</dbReference>
<dbReference type="Gene3D" id="3.30.70.330">
    <property type="match status" value="2"/>
</dbReference>
<dbReference type="Gene3D" id="4.10.1060.10">
    <property type="entry name" value="Zinc finger, RanBP2-type"/>
    <property type="match status" value="1"/>
</dbReference>
<dbReference type="InterPro" id="IPR000467">
    <property type="entry name" value="G_patch_dom"/>
</dbReference>
<dbReference type="InterPro" id="IPR012677">
    <property type="entry name" value="Nucleotide-bd_a/b_plait_sf"/>
</dbReference>
<dbReference type="InterPro" id="IPR041591">
    <property type="entry name" value="OCRE"/>
</dbReference>
<dbReference type="InterPro" id="IPR035979">
    <property type="entry name" value="RBD_domain_sf"/>
</dbReference>
<dbReference type="InterPro" id="IPR034991">
    <property type="entry name" value="RBM5_RRM1"/>
</dbReference>
<dbReference type="InterPro" id="IPR034993">
    <property type="entry name" value="RBM5_RRM2"/>
</dbReference>
<dbReference type="InterPro" id="IPR000504">
    <property type="entry name" value="RRM_dom"/>
</dbReference>
<dbReference type="InterPro" id="IPR013087">
    <property type="entry name" value="Znf_C2H2_type"/>
</dbReference>
<dbReference type="InterPro" id="IPR001876">
    <property type="entry name" value="Znf_RanBP2"/>
</dbReference>
<dbReference type="InterPro" id="IPR036443">
    <property type="entry name" value="Znf_RanBP2_sf"/>
</dbReference>
<dbReference type="PANTHER" id="PTHR13948">
    <property type="entry name" value="RNA-BINDING PROTEIN"/>
    <property type="match status" value="1"/>
</dbReference>
<dbReference type="PANTHER" id="PTHR13948:SF21">
    <property type="entry name" value="RNA-BINDING PROTEIN 5"/>
    <property type="match status" value="1"/>
</dbReference>
<dbReference type="Pfam" id="PF01585">
    <property type="entry name" value="G-patch"/>
    <property type="match status" value="1"/>
</dbReference>
<dbReference type="Pfam" id="PF17780">
    <property type="entry name" value="OCRE"/>
    <property type="match status" value="1"/>
</dbReference>
<dbReference type="Pfam" id="PF00076">
    <property type="entry name" value="RRM_1"/>
    <property type="match status" value="2"/>
</dbReference>
<dbReference type="Pfam" id="PF00641">
    <property type="entry name" value="Zn_ribbon_RanBP"/>
    <property type="match status" value="1"/>
</dbReference>
<dbReference type="SMART" id="SM00443">
    <property type="entry name" value="G_patch"/>
    <property type="match status" value="1"/>
</dbReference>
<dbReference type="SMART" id="SM00360">
    <property type="entry name" value="RRM"/>
    <property type="match status" value="2"/>
</dbReference>
<dbReference type="SMART" id="SM00547">
    <property type="entry name" value="ZnF_RBZ"/>
    <property type="match status" value="1"/>
</dbReference>
<dbReference type="SUPFAM" id="SSF90209">
    <property type="entry name" value="Ran binding protein zinc finger-like"/>
    <property type="match status" value="1"/>
</dbReference>
<dbReference type="SUPFAM" id="SSF54928">
    <property type="entry name" value="RNA-binding domain, RBD"/>
    <property type="match status" value="2"/>
</dbReference>
<dbReference type="PROSITE" id="PS50174">
    <property type="entry name" value="G_PATCH"/>
    <property type="match status" value="1"/>
</dbReference>
<dbReference type="PROSITE" id="PS50102">
    <property type="entry name" value="RRM"/>
    <property type="match status" value="2"/>
</dbReference>
<dbReference type="PROSITE" id="PS01358">
    <property type="entry name" value="ZF_RANBP2_1"/>
    <property type="match status" value="1"/>
</dbReference>
<dbReference type="PROSITE" id="PS50199">
    <property type="entry name" value="ZF_RANBP2_2"/>
    <property type="match status" value="1"/>
</dbReference>
<dbReference type="PROSITE" id="PS50157">
    <property type="entry name" value="ZINC_FINGER_C2H2_2"/>
    <property type="match status" value="1"/>
</dbReference>
<evidence type="ECO:0000255" key="1">
    <source>
        <dbReference type="PROSITE-ProRule" id="PRU00042"/>
    </source>
</evidence>
<evidence type="ECO:0000255" key="2">
    <source>
        <dbReference type="PROSITE-ProRule" id="PRU00092"/>
    </source>
</evidence>
<evidence type="ECO:0000255" key="3">
    <source>
        <dbReference type="PROSITE-ProRule" id="PRU00176"/>
    </source>
</evidence>
<evidence type="ECO:0000255" key="4">
    <source>
        <dbReference type="PROSITE-ProRule" id="PRU00322"/>
    </source>
</evidence>
<evidence type="ECO:0000256" key="5">
    <source>
        <dbReference type="SAM" id="MobiDB-lite"/>
    </source>
</evidence>
<evidence type="ECO:0000269" key="6">
    <source>
    </source>
</evidence>
<evidence type="ECO:0000269" key="7">
    <source>
    </source>
</evidence>
<evidence type="ECO:0000269" key="8">
    <source>
    </source>
</evidence>
<evidence type="ECO:0000269" key="9">
    <source>
    </source>
</evidence>
<evidence type="ECO:0000269" key="10">
    <source>
    </source>
</evidence>
<evidence type="ECO:0000269" key="11">
    <source>
    </source>
</evidence>
<evidence type="ECO:0000269" key="12">
    <source>
    </source>
</evidence>
<evidence type="ECO:0000269" key="13">
    <source>
    </source>
</evidence>
<evidence type="ECO:0000269" key="14">
    <source>
    </source>
</evidence>
<evidence type="ECO:0000303" key="15">
    <source>
    </source>
</evidence>
<evidence type="ECO:0000303" key="16">
    <source>
    </source>
</evidence>
<evidence type="ECO:0000305" key="17"/>
<evidence type="ECO:0007744" key="18">
    <source>
    </source>
</evidence>
<evidence type="ECO:0007744" key="19">
    <source>
    </source>
</evidence>
<evidence type="ECO:0007744" key="20">
    <source>
    </source>
</evidence>
<evidence type="ECO:0007744" key="21">
    <source>
    </source>
</evidence>
<evidence type="ECO:0007744" key="22">
    <source>
    </source>
</evidence>
<evidence type="ECO:0007744" key="23">
    <source>
    </source>
</evidence>
<evidence type="ECO:0007744" key="24">
    <source>
    </source>
</evidence>
<evidence type="ECO:0007744" key="25">
    <source>
    </source>
</evidence>
<evidence type="ECO:0007744" key="26">
    <source>
    </source>
</evidence>
<evidence type="ECO:0007829" key="27">
    <source>
        <dbReference type="PDB" id="2LK0"/>
    </source>
</evidence>
<evidence type="ECO:0007829" key="28">
    <source>
        <dbReference type="PDB" id="2LKZ"/>
    </source>
</evidence>
<evidence type="ECO:0007829" key="29">
    <source>
        <dbReference type="PDB" id="5MF9"/>
    </source>
</evidence>
<evidence type="ECO:0007829" key="30">
    <source>
        <dbReference type="PDB" id="7PCV"/>
    </source>
</evidence>